<gene>
    <name type="ORF">A19R</name>
</gene>
<organism>
    <name type="scientific">Cowpox virus (strain GRI-90 / Grishak)</name>
    <name type="common">CPV</name>
    <dbReference type="NCBI Taxonomy" id="265871"/>
    <lineage>
        <taxon>Viruses</taxon>
        <taxon>Varidnaviria</taxon>
        <taxon>Bamfordvirae</taxon>
        <taxon>Nucleocytoviricota</taxon>
        <taxon>Pokkesviricetes</taxon>
        <taxon>Chitovirales</taxon>
        <taxon>Poxviridae</taxon>
        <taxon>Chordopoxvirinae</taxon>
        <taxon>Orthopoxvirus</taxon>
        <taxon>Cowpox virus</taxon>
    </lineage>
</organism>
<feature type="chain" id="PRO_0000102183" description="Transcript termination protein A18">
    <location>
        <begin position="1"/>
        <end position="493"/>
    </location>
</feature>
<feature type="domain" description="Helicase ATP-binding" evidence="2">
    <location>
        <begin position="100"/>
        <end position="256"/>
    </location>
</feature>
<feature type="short sequence motif" description="DESH box">
    <location>
        <begin position="206"/>
        <end position="209"/>
    </location>
</feature>
<feature type="binding site" evidence="2">
    <location>
        <begin position="113"/>
        <end position="120"/>
    </location>
    <ligand>
        <name>ATP</name>
        <dbReference type="ChEBI" id="CHEBI:30616"/>
    </ligand>
</feature>
<evidence type="ECO:0000250" key="1"/>
<evidence type="ECO:0000255" key="2">
    <source>
        <dbReference type="PROSITE-ProRule" id="PRU00541"/>
    </source>
</evidence>
<evidence type="ECO:0000305" key="3"/>
<comment type="function">
    <text evidence="1">DNA helicase which seems to act as a postreplicative transcription termination factor. Involved in ATP-dependent release of nascent RNA. Forms a stable complex with single-stranded DNA, and to a lesser extent RNA (By similarity).</text>
</comment>
<comment type="subunit">
    <text evidence="1">Interacts with G2. Might be part of a transcription complex composed at least of G2, A18, and H5.</text>
</comment>
<comment type="subcellular location">
    <subcellularLocation>
        <location evidence="1">Virion</location>
    </subcellularLocation>
    <text evidence="1">Localizes to the virion core.</text>
</comment>
<comment type="similarity">
    <text evidence="3">Belongs to the helicase family. Poxviruses subfamily.</text>
</comment>
<sequence>MSLLKMEYNLYAELKKMTCGQTISLFNEDGDFVEVEPGSSFKFLIPKGFYSSPSVKTSLVFETLTTTDNKITSINPTNAPKLYPLQRKVVSEVVSNMRKMIELKRPLYITLHLACGFGKTITTCYLMATHGRKTVICVPNKMLIHQWKTQVEAVGLEHKISIDGVSSLLKELKTQSPDVLIVVSRHLTNDAFCKYINKHYDLFILDESHTYNLMNNTAVTRFLAYYPPMMCYFLTATPRPANRIYCNSIINIAKLSDLKKTIYVVDSFFEPYSTDNIRHMIKRLDGPSNKYHIYTEKLLSVDEPRNQLILNTLVEEFKSGTINRILVITKLREHMVLFYKRLLDLFGPEVVFIGDAQNRRTPDMVKSIKELNRFIFVSTLFYSGTGLDIPSLDSLFICSAVINNMQIEQLLGRVCRETELLDRTVYVFPNTSIKEIKYMIGNFVQRIISLSVDKLGFKQESYRKHQESDPTSACTASSREERVLNRIFNSQNR</sequence>
<keyword id="KW-0067">ATP-binding</keyword>
<keyword id="KW-0238">DNA-binding</keyword>
<keyword id="KW-0347">Helicase</keyword>
<keyword id="KW-0378">Hydrolase</keyword>
<keyword id="KW-0426">Late protein</keyword>
<keyword id="KW-0547">Nucleotide-binding</keyword>
<keyword id="KW-0804">Transcription</keyword>
<keyword id="KW-0946">Virion</keyword>
<name>A18_CWPXG</name>
<accession>Q80DV6</accession>
<dbReference type="EC" id="3.6.4.-"/>
<dbReference type="EMBL" id="X94355">
    <property type="protein sequence ID" value="CAD90686.1"/>
    <property type="molecule type" value="Genomic_DNA"/>
</dbReference>
<dbReference type="Proteomes" id="UP000137384">
    <property type="component" value="Segment"/>
</dbReference>
<dbReference type="GO" id="GO:0044423">
    <property type="term" value="C:virion component"/>
    <property type="evidence" value="ECO:0007669"/>
    <property type="project" value="UniProtKB-KW"/>
</dbReference>
<dbReference type="GO" id="GO:0005524">
    <property type="term" value="F:ATP binding"/>
    <property type="evidence" value="ECO:0007669"/>
    <property type="project" value="UniProtKB-KW"/>
</dbReference>
<dbReference type="GO" id="GO:0003677">
    <property type="term" value="F:DNA binding"/>
    <property type="evidence" value="ECO:0007669"/>
    <property type="project" value="UniProtKB-KW"/>
</dbReference>
<dbReference type="GO" id="GO:0004386">
    <property type="term" value="F:helicase activity"/>
    <property type="evidence" value="ECO:0007669"/>
    <property type="project" value="UniProtKB-KW"/>
</dbReference>
<dbReference type="GO" id="GO:0016787">
    <property type="term" value="F:hydrolase activity"/>
    <property type="evidence" value="ECO:0007669"/>
    <property type="project" value="UniProtKB-KW"/>
</dbReference>
<dbReference type="CDD" id="cd18785">
    <property type="entry name" value="SF2_C"/>
    <property type="match status" value="1"/>
</dbReference>
<dbReference type="Gene3D" id="3.40.50.300">
    <property type="entry name" value="P-loop containing nucleotide triphosphate hydrolases"/>
    <property type="match status" value="2"/>
</dbReference>
<dbReference type="InterPro" id="IPR006935">
    <property type="entry name" value="Helicase/UvrB_N"/>
</dbReference>
<dbReference type="InterPro" id="IPR014001">
    <property type="entry name" value="Helicase_ATP-bd"/>
</dbReference>
<dbReference type="InterPro" id="IPR050742">
    <property type="entry name" value="Helicase_Restrict-Modif_Enz"/>
</dbReference>
<dbReference type="InterPro" id="IPR027417">
    <property type="entry name" value="P-loop_NTPase"/>
</dbReference>
<dbReference type="PANTHER" id="PTHR47396:SF1">
    <property type="entry name" value="ATP-DEPENDENT HELICASE IRC3-RELATED"/>
    <property type="match status" value="1"/>
</dbReference>
<dbReference type="PANTHER" id="PTHR47396">
    <property type="entry name" value="TYPE I RESTRICTION ENZYME ECOKI R PROTEIN"/>
    <property type="match status" value="1"/>
</dbReference>
<dbReference type="Pfam" id="PF04851">
    <property type="entry name" value="ResIII"/>
    <property type="match status" value="1"/>
</dbReference>
<dbReference type="SMART" id="SM00487">
    <property type="entry name" value="DEXDc"/>
    <property type="match status" value="1"/>
</dbReference>
<dbReference type="SUPFAM" id="SSF52540">
    <property type="entry name" value="P-loop containing nucleoside triphosphate hydrolases"/>
    <property type="match status" value="1"/>
</dbReference>
<dbReference type="PROSITE" id="PS51192">
    <property type="entry name" value="HELICASE_ATP_BIND_1"/>
    <property type="match status" value="1"/>
</dbReference>
<protein>
    <recommendedName>
        <fullName>Transcript termination protein A18</fullName>
        <ecNumber>3.6.4.-</ecNumber>
    </recommendedName>
</protein>
<organismHost>
    <name type="scientific">Bos taurus</name>
    <name type="common">Bovine</name>
    <dbReference type="NCBI Taxonomy" id="9913"/>
</organismHost>
<organismHost>
    <name type="scientific">Felis catus</name>
    <name type="common">Cat</name>
    <name type="synonym">Felis silvestris catus</name>
    <dbReference type="NCBI Taxonomy" id="9685"/>
</organismHost>
<organismHost>
    <name type="scientific">Homo sapiens</name>
    <name type="common">Human</name>
    <dbReference type="NCBI Taxonomy" id="9606"/>
</organismHost>
<organismHost>
    <name type="scientific">Loxodonta africana</name>
    <name type="common">African elephant</name>
    <dbReference type="NCBI Taxonomy" id="9785"/>
</organismHost>
<organismHost>
    <name type="scientific">Microtus agrestis</name>
    <name type="common">Short-tailed field vole</name>
    <dbReference type="NCBI Taxonomy" id="29092"/>
</organismHost>
<organismHost>
    <name type="scientific">Mus musculus</name>
    <name type="common">Mouse</name>
    <dbReference type="NCBI Taxonomy" id="10090"/>
</organismHost>
<organismHost>
    <name type="scientific">Myodes glareolus</name>
    <name type="common">Bank vole</name>
    <name type="synonym">Clethrionomys glareolus</name>
    <dbReference type="NCBI Taxonomy" id="447135"/>
</organismHost>
<proteinExistence type="inferred from homology"/>
<reference key="1">
    <citation type="submission" date="2003-03" db="EMBL/GenBank/DDBJ databases">
        <title>Structure-function and organization of cowpox virus strain GRI-90 complete genome.</title>
        <authorList>
            <person name="Shchelkunov S.N."/>
            <person name="Safronov P.F."/>
            <person name="Totmenin A.V."/>
            <person name="Miheev M.V."/>
            <person name="Ryazankina O.I."/>
            <person name="Petrov N.A."/>
            <person name="Gutorov V.V."/>
            <person name="Kotwal G.J."/>
            <person name="Sandakhchiev L.S."/>
        </authorList>
    </citation>
    <scope>NUCLEOTIDE SEQUENCE [LARGE SCALE GENOMIC DNA]</scope>
</reference>